<reference key="1">
    <citation type="submission" date="2008-03" db="EMBL/GenBank/DDBJ databases">
        <title>Complete sequence of Thermoproteus neutrophilus V24Sta.</title>
        <authorList>
            <consortium name="US DOE Joint Genome Institute"/>
            <person name="Copeland A."/>
            <person name="Lucas S."/>
            <person name="Lapidus A."/>
            <person name="Glavina del Rio T."/>
            <person name="Dalin E."/>
            <person name="Tice H."/>
            <person name="Bruce D."/>
            <person name="Goodwin L."/>
            <person name="Pitluck S."/>
            <person name="Sims D."/>
            <person name="Brettin T."/>
            <person name="Detter J.C."/>
            <person name="Han C."/>
            <person name="Kuske C.R."/>
            <person name="Schmutz J."/>
            <person name="Larimer F."/>
            <person name="Land M."/>
            <person name="Hauser L."/>
            <person name="Kyrpides N."/>
            <person name="Mikhailova N."/>
            <person name="Biddle J.F."/>
            <person name="Zhang Z."/>
            <person name="Fitz-Gibbon S.T."/>
            <person name="Lowe T.M."/>
            <person name="Saltikov C."/>
            <person name="House C.H."/>
            <person name="Richardson P."/>
        </authorList>
    </citation>
    <scope>NUCLEOTIDE SEQUENCE [LARGE SCALE GENOMIC DNA]</scope>
    <source>
        <strain>DSM 2338 / JCM 9278 / NBRC 100436 / V24Sta</strain>
    </source>
</reference>
<protein>
    <recommendedName>
        <fullName evidence="1">A-type ATP synthase subunit E</fullName>
    </recommendedName>
</protein>
<evidence type="ECO:0000255" key="1">
    <source>
        <dbReference type="HAMAP-Rule" id="MF_00311"/>
    </source>
</evidence>
<dbReference type="EMBL" id="CP001014">
    <property type="protein sequence ID" value="ACB40875.1"/>
    <property type="molecule type" value="Genomic_DNA"/>
</dbReference>
<dbReference type="RefSeq" id="WP_012351294.1">
    <property type="nucleotide sequence ID" value="NC_010525.1"/>
</dbReference>
<dbReference type="SMR" id="B1YC21"/>
<dbReference type="STRING" id="444157.Tneu_1960"/>
<dbReference type="GeneID" id="6164456"/>
<dbReference type="KEGG" id="tne:Tneu_1960"/>
<dbReference type="eggNOG" id="arCOG00869">
    <property type="taxonomic scope" value="Archaea"/>
</dbReference>
<dbReference type="HOGENOM" id="CLU_1425139_0_0_2"/>
<dbReference type="OrthoDB" id="26028at2157"/>
<dbReference type="Proteomes" id="UP000001694">
    <property type="component" value="Chromosome"/>
</dbReference>
<dbReference type="GO" id="GO:0005886">
    <property type="term" value="C:plasma membrane"/>
    <property type="evidence" value="ECO:0007669"/>
    <property type="project" value="UniProtKB-SubCell"/>
</dbReference>
<dbReference type="GO" id="GO:0033178">
    <property type="term" value="C:proton-transporting two-sector ATPase complex, catalytic domain"/>
    <property type="evidence" value="ECO:0007669"/>
    <property type="project" value="InterPro"/>
</dbReference>
<dbReference type="GO" id="GO:0005524">
    <property type="term" value="F:ATP binding"/>
    <property type="evidence" value="ECO:0007669"/>
    <property type="project" value="UniProtKB-UniRule"/>
</dbReference>
<dbReference type="GO" id="GO:0046933">
    <property type="term" value="F:proton-transporting ATP synthase activity, rotational mechanism"/>
    <property type="evidence" value="ECO:0007669"/>
    <property type="project" value="UniProtKB-UniRule"/>
</dbReference>
<dbReference type="GO" id="GO:0046961">
    <property type="term" value="F:proton-transporting ATPase activity, rotational mechanism"/>
    <property type="evidence" value="ECO:0007669"/>
    <property type="project" value="InterPro"/>
</dbReference>
<dbReference type="GO" id="GO:0042777">
    <property type="term" value="P:proton motive force-driven plasma membrane ATP synthesis"/>
    <property type="evidence" value="ECO:0007669"/>
    <property type="project" value="UniProtKB-UniRule"/>
</dbReference>
<dbReference type="Gene3D" id="3.30.2320.30">
    <property type="entry name" value="ATP synthase, E subunit, C-terminal"/>
    <property type="match status" value="1"/>
</dbReference>
<dbReference type="HAMAP" id="MF_00311">
    <property type="entry name" value="ATP_synth_E_arch"/>
    <property type="match status" value="1"/>
</dbReference>
<dbReference type="InterPro" id="IPR038495">
    <property type="entry name" value="ATPase_E_C"/>
</dbReference>
<dbReference type="InterPro" id="IPR002842">
    <property type="entry name" value="ATPase_V1_Esu"/>
</dbReference>
<dbReference type="Pfam" id="PF01991">
    <property type="entry name" value="vATP-synt_E"/>
    <property type="match status" value="1"/>
</dbReference>
<dbReference type="SUPFAM" id="SSF160527">
    <property type="entry name" value="V-type ATPase subunit E-like"/>
    <property type="match status" value="1"/>
</dbReference>
<gene>
    <name evidence="1" type="primary">atpE</name>
    <name type="ordered locus">Tneu_1960</name>
</gene>
<organism>
    <name type="scientific">Pyrobaculum neutrophilum (strain DSM 2338 / JCM 9278 / NBRC 100436 / V24Sta)</name>
    <name type="common">Thermoproteus neutrophilus</name>
    <dbReference type="NCBI Taxonomy" id="444157"/>
    <lineage>
        <taxon>Archaea</taxon>
        <taxon>Thermoproteota</taxon>
        <taxon>Thermoprotei</taxon>
        <taxon>Thermoproteales</taxon>
        <taxon>Thermoproteaceae</taxon>
        <taxon>Pyrobaculum</taxon>
    </lineage>
</organism>
<accession>B1YC21</accession>
<feature type="chain" id="PRO_1000115680" description="A-type ATP synthase subunit E">
    <location>
        <begin position="1"/>
        <end position="190"/>
    </location>
</feature>
<sequence>MSLFEDLINSKIRELEDLKRNLLVNIETNIRREADAALSKFSAQLANVESEATLERERIIYNAVVEARRKIAEVYDQMLKDLVNAVYEEVDKMRGAERYVKFLTSLLETAEKYVQTKDVVIYASPKDKGVVEAVARNLGLTGIVAEKDIRGGVVVTTRDGSITVDYSLESLIANKIEELKHLLYQMTYER</sequence>
<comment type="function">
    <text evidence="1">Component of the A-type ATP synthase that produces ATP from ADP in the presence of a proton gradient across the membrane.</text>
</comment>
<comment type="subunit">
    <text evidence="1">Has multiple subunits with at least A(3), B(3), C, D, E, F, H, I and proteolipid K(x).</text>
</comment>
<comment type="subcellular location">
    <subcellularLocation>
        <location evidence="1">Cell membrane</location>
        <topology evidence="1">Peripheral membrane protein</topology>
    </subcellularLocation>
</comment>
<comment type="similarity">
    <text evidence="1">Belongs to the V-ATPase E subunit family.</text>
</comment>
<keyword id="KW-0066">ATP synthesis</keyword>
<keyword id="KW-1003">Cell membrane</keyword>
<keyword id="KW-0375">Hydrogen ion transport</keyword>
<keyword id="KW-0406">Ion transport</keyword>
<keyword id="KW-0472">Membrane</keyword>
<keyword id="KW-0813">Transport</keyword>
<name>AATE_PYRNV</name>
<proteinExistence type="inferred from homology"/>